<keyword id="KW-0029">Amino-acid transport</keyword>
<keyword id="KW-0997">Cell inner membrane</keyword>
<keyword id="KW-1003">Cell membrane</keyword>
<keyword id="KW-0472">Membrane</keyword>
<keyword id="KW-1185">Reference proteome</keyword>
<keyword id="KW-0812">Transmembrane</keyword>
<keyword id="KW-1133">Transmembrane helix</keyword>
<keyword id="KW-0813">Transport</keyword>
<feature type="chain" id="PRO_0000099774" description="Branched-chain amino acid transport system 3 carrier protein">
    <location>
        <begin position="1"/>
        <end position="437"/>
    </location>
</feature>
<feature type="transmembrane region" description="Helical" evidence="1">
    <location>
        <begin position="9"/>
        <end position="29"/>
    </location>
</feature>
<feature type="transmembrane region" description="Helical" evidence="1">
    <location>
        <begin position="40"/>
        <end position="60"/>
    </location>
</feature>
<feature type="transmembrane region" description="Helical" evidence="1">
    <location>
        <begin position="79"/>
        <end position="99"/>
    </location>
</feature>
<feature type="transmembrane region" description="Helical" evidence="1">
    <location>
        <begin position="120"/>
        <end position="140"/>
    </location>
</feature>
<feature type="transmembrane region" description="Helical" evidence="1">
    <location>
        <begin position="155"/>
        <end position="175"/>
    </location>
</feature>
<feature type="transmembrane region" description="Helical" evidence="1">
    <location>
        <begin position="189"/>
        <end position="209"/>
    </location>
</feature>
<feature type="transmembrane region" description="Helical" evidence="1">
    <location>
        <begin position="226"/>
        <end position="246"/>
    </location>
</feature>
<feature type="transmembrane region" description="Helical" evidence="1">
    <location>
        <begin position="277"/>
        <end position="297"/>
    </location>
</feature>
<feature type="transmembrane region" description="Helical" evidence="1">
    <location>
        <begin position="316"/>
        <end position="336"/>
    </location>
</feature>
<feature type="transmembrane region" description="Helical" evidence="1">
    <location>
        <begin position="342"/>
        <end position="362"/>
    </location>
</feature>
<feature type="transmembrane region" description="Helical" evidence="1">
    <location>
        <begin position="369"/>
        <end position="389"/>
    </location>
</feature>
<feature type="transmembrane region" description="Helical" evidence="1">
    <location>
        <begin position="399"/>
        <end position="419"/>
    </location>
</feature>
<accession>P25185</accession>
<name>BRAZ_PSEAE</name>
<sequence length="437" mass="45274">MNALKGRDILALGFMTFALFVGAGNIIFPPIVGLQSGPHVWLAALGFLITAVGLPVITVIALAKVGGSVDALSHPIGRYAGGLLAAVCYLAVGPLFAIPRTATVSFEVGVVPLLGESGTALFVYSLAYFLLALAISLYPGRLLDTVGRFLAPLKILALAILGVAAFLWPAGPIGTAQPEYTQAAFSQGFVNGYLTMDTLAALVFGIVIVNAIRSRGVQSPRLITRYAIVAGLIAGVGLVLVYVSLFRLGAGSHAIAADASNGAAVLHAYVQHTFGSLGSSFLAGLIALACLVTAVGLTCACAEYFCQRLPLSYRSLVIILAGFSFIVSNLGLTKLIQVSIPVLTAIYPPCIVLVALSFCIGLWHSATRILAPVMLVSLAFGVLDALKAAGLGQDFPQWLLHLPLAEQGLAWLIPSVATLAACSLVDRLLGKPAQVAA</sequence>
<organism>
    <name type="scientific">Pseudomonas aeruginosa (strain ATCC 15692 / DSM 22644 / CIP 104116 / JCM 14847 / LMG 12228 / 1C / PRS 101 / PAO1)</name>
    <dbReference type="NCBI Taxonomy" id="208964"/>
    <lineage>
        <taxon>Bacteria</taxon>
        <taxon>Pseudomonadati</taxon>
        <taxon>Pseudomonadota</taxon>
        <taxon>Gammaproteobacteria</taxon>
        <taxon>Pseudomonadales</taxon>
        <taxon>Pseudomonadaceae</taxon>
        <taxon>Pseudomonas</taxon>
    </lineage>
</organism>
<protein>
    <recommendedName>
        <fullName>Branched-chain amino acid transport system 3 carrier protein</fullName>
    </recommendedName>
    <alternativeName>
        <fullName>LIV-III</fullName>
    </alternativeName>
</protein>
<evidence type="ECO:0000255" key="1"/>
<evidence type="ECO:0000305" key="2"/>
<comment type="function">
    <text>Component of the LIV-III transport system for branched-chain amino acids. BraZ is specific for isoleucine and valine. The LIV-III transport system may be H(+)-coupled.</text>
</comment>
<comment type="subcellular location">
    <subcellularLocation>
        <location>Cell inner membrane</location>
        <topology>Multi-pass membrane protein</topology>
    </subcellularLocation>
</comment>
<comment type="similarity">
    <text evidence="2">Belongs to the branched chain amino acid transporter family.</text>
</comment>
<reference key="1">
    <citation type="journal article" date="1991" name="J. Bacteriol.">
        <title>Isolation of the braZ gene encoding the carrier for a novel branched-chain amino acid transport system in Pseudomonas aeruginosa PAO.</title>
        <authorList>
            <person name="Hoshino T."/>
            <person name="Kose-Terai K."/>
            <person name="Uratani Y."/>
        </authorList>
    </citation>
    <scope>NUCLEOTIDE SEQUENCE [GENOMIC DNA]</scope>
    <source>
        <strain>PAO</strain>
    </source>
</reference>
<reference key="2">
    <citation type="journal article" date="2000" name="Nature">
        <title>Complete genome sequence of Pseudomonas aeruginosa PAO1, an opportunistic pathogen.</title>
        <authorList>
            <person name="Stover C.K."/>
            <person name="Pham X.-Q.T."/>
            <person name="Erwin A.L."/>
            <person name="Mizoguchi S.D."/>
            <person name="Warrener P."/>
            <person name="Hickey M.J."/>
            <person name="Brinkman F.S.L."/>
            <person name="Hufnagle W.O."/>
            <person name="Kowalik D.J."/>
            <person name="Lagrou M."/>
            <person name="Garber R.L."/>
            <person name="Goltry L."/>
            <person name="Tolentino E."/>
            <person name="Westbrock-Wadman S."/>
            <person name="Yuan Y."/>
            <person name="Brody L.L."/>
            <person name="Coulter S.N."/>
            <person name="Folger K.R."/>
            <person name="Kas A."/>
            <person name="Larbig K."/>
            <person name="Lim R.M."/>
            <person name="Smith K.A."/>
            <person name="Spencer D.H."/>
            <person name="Wong G.K.-S."/>
            <person name="Wu Z."/>
            <person name="Paulsen I.T."/>
            <person name="Reizer J."/>
            <person name="Saier M.H. Jr."/>
            <person name="Hancock R.E.W."/>
            <person name="Lory S."/>
            <person name="Olson M.V."/>
        </authorList>
    </citation>
    <scope>NUCLEOTIDE SEQUENCE [LARGE SCALE GENOMIC DNA]</scope>
    <source>
        <strain>ATCC 15692 / DSM 22644 / CIP 104116 / JCM 14847 / LMG 12228 / 1C / PRS 101 / PAO1</strain>
    </source>
</reference>
<gene>
    <name type="primary">braZ</name>
    <name type="ordered locus">PA1971</name>
</gene>
<proteinExistence type="inferred from homology"/>
<dbReference type="EMBL" id="D90222">
    <property type="protein sequence ID" value="BAA14253.1"/>
    <property type="molecule type" value="Genomic_DNA"/>
</dbReference>
<dbReference type="EMBL" id="AE004091">
    <property type="protein sequence ID" value="AAG05359.1"/>
    <property type="molecule type" value="Genomic_DNA"/>
</dbReference>
<dbReference type="PIR" id="A38534">
    <property type="entry name" value="A38534"/>
</dbReference>
<dbReference type="RefSeq" id="NP_250661.1">
    <property type="nucleotide sequence ID" value="NC_002516.2"/>
</dbReference>
<dbReference type="FunCoup" id="P25185">
    <property type="interactions" value="49"/>
</dbReference>
<dbReference type="STRING" id="208964.PA1971"/>
<dbReference type="TCDB" id="2.A.26.1.2">
    <property type="family name" value="the branched chain amino acid:cation symporter (livcs) family"/>
</dbReference>
<dbReference type="PaxDb" id="208964-PA1971"/>
<dbReference type="GeneID" id="879216"/>
<dbReference type="KEGG" id="pae:PA1971"/>
<dbReference type="PATRIC" id="fig|208964.12.peg.2054"/>
<dbReference type="PseudoCAP" id="PA1971"/>
<dbReference type="HOGENOM" id="CLU_036807_0_0_6"/>
<dbReference type="InParanoid" id="P25185"/>
<dbReference type="OrthoDB" id="9783920at2"/>
<dbReference type="PhylomeDB" id="P25185"/>
<dbReference type="BioCyc" id="PAER208964:G1FZ6-2009-MONOMER"/>
<dbReference type="Proteomes" id="UP000002438">
    <property type="component" value="Chromosome"/>
</dbReference>
<dbReference type="GO" id="GO:0005886">
    <property type="term" value="C:plasma membrane"/>
    <property type="evidence" value="ECO:0000318"/>
    <property type="project" value="GO_Central"/>
</dbReference>
<dbReference type="GO" id="GO:0015188">
    <property type="term" value="F:L-isoleucine transmembrane transporter activity"/>
    <property type="evidence" value="ECO:0000318"/>
    <property type="project" value="GO_Central"/>
</dbReference>
<dbReference type="GO" id="GO:0015190">
    <property type="term" value="F:L-leucine transmembrane transporter activity"/>
    <property type="evidence" value="ECO:0000318"/>
    <property type="project" value="GO_Central"/>
</dbReference>
<dbReference type="GO" id="GO:0005304">
    <property type="term" value="F:L-valine transmembrane transporter activity"/>
    <property type="evidence" value="ECO:0000318"/>
    <property type="project" value="GO_Central"/>
</dbReference>
<dbReference type="GO" id="GO:0015803">
    <property type="term" value="P:branched-chain amino acid transport"/>
    <property type="evidence" value="ECO:0000314"/>
    <property type="project" value="PseudoCAP"/>
</dbReference>
<dbReference type="GO" id="GO:0015818">
    <property type="term" value="P:isoleucine transport"/>
    <property type="evidence" value="ECO:0000318"/>
    <property type="project" value="GO_Central"/>
</dbReference>
<dbReference type="GO" id="GO:0015820">
    <property type="term" value="P:L-leucine transport"/>
    <property type="evidence" value="ECO:0000318"/>
    <property type="project" value="GO_Central"/>
</dbReference>
<dbReference type="GO" id="GO:0015829">
    <property type="term" value="P:valine transport"/>
    <property type="evidence" value="ECO:0000318"/>
    <property type="project" value="GO_Central"/>
</dbReference>
<dbReference type="InterPro" id="IPR004685">
    <property type="entry name" value="Brnchd-chn_aa_trnsp_Livcs"/>
</dbReference>
<dbReference type="NCBIfam" id="TIGR00796">
    <property type="entry name" value="livcs"/>
    <property type="match status" value="1"/>
</dbReference>
<dbReference type="PANTHER" id="PTHR30588:SF0">
    <property type="entry name" value="BRANCHED-CHAIN AMINO ACID PERMEASE BRNQ"/>
    <property type="match status" value="1"/>
</dbReference>
<dbReference type="PANTHER" id="PTHR30588">
    <property type="entry name" value="BRANCHED-CHAIN AMINO ACID TRANSPORT SYSTEM 2 CARRIER PROTEIN"/>
    <property type="match status" value="1"/>
</dbReference>
<dbReference type="Pfam" id="PF05525">
    <property type="entry name" value="Branch_AA_trans"/>
    <property type="match status" value="1"/>
</dbReference>